<feature type="chain" id="PRO_1000087726" description="UPF0354 protein SaurJH1_1833">
    <location>
        <begin position="1"/>
        <end position="285"/>
    </location>
</feature>
<comment type="similarity">
    <text evidence="1">Belongs to the UPF0354 family.</text>
</comment>
<evidence type="ECO:0000255" key="1">
    <source>
        <dbReference type="HAMAP-Rule" id="MF_01548"/>
    </source>
</evidence>
<reference key="1">
    <citation type="submission" date="2007-06" db="EMBL/GenBank/DDBJ databases">
        <title>Complete sequence of chromosome of Staphylococcus aureus subsp. aureus JH1.</title>
        <authorList>
            <consortium name="US DOE Joint Genome Institute"/>
            <person name="Copeland A."/>
            <person name="Lucas S."/>
            <person name="Lapidus A."/>
            <person name="Barry K."/>
            <person name="Detter J.C."/>
            <person name="Glavina del Rio T."/>
            <person name="Hammon N."/>
            <person name="Israni S."/>
            <person name="Dalin E."/>
            <person name="Tice H."/>
            <person name="Pitluck S."/>
            <person name="Chain P."/>
            <person name="Malfatti S."/>
            <person name="Shin M."/>
            <person name="Vergez L."/>
            <person name="Schmutz J."/>
            <person name="Larimer F."/>
            <person name="Land M."/>
            <person name="Hauser L."/>
            <person name="Kyrpides N."/>
            <person name="Ivanova N."/>
            <person name="Tomasz A."/>
            <person name="Richardson P."/>
        </authorList>
    </citation>
    <scope>NUCLEOTIDE SEQUENCE [LARGE SCALE GENOMIC DNA]</scope>
    <source>
        <strain>JH1</strain>
    </source>
</reference>
<dbReference type="EMBL" id="CP000736">
    <property type="protein sequence ID" value="ABR52677.1"/>
    <property type="molecule type" value="Genomic_DNA"/>
</dbReference>
<dbReference type="KEGG" id="sah:SaurJH1_1833"/>
<dbReference type="HOGENOM" id="CLU_085634_0_0_9"/>
<dbReference type="HAMAP" id="MF_01548">
    <property type="entry name" value="UPF0354"/>
    <property type="match status" value="1"/>
</dbReference>
<dbReference type="InterPro" id="IPR010838">
    <property type="entry name" value="DUF1444"/>
</dbReference>
<dbReference type="NCBIfam" id="NF010189">
    <property type="entry name" value="PRK13668.1"/>
    <property type="match status" value="1"/>
</dbReference>
<dbReference type="Pfam" id="PF07285">
    <property type="entry name" value="DUF1444"/>
    <property type="match status" value="1"/>
</dbReference>
<dbReference type="PIRSF" id="PIRSF012562">
    <property type="entry name" value="UCP012562"/>
    <property type="match status" value="1"/>
</dbReference>
<name>Y1833_STAA2</name>
<accession>A6U2K9</accession>
<sequence length="285" mass="33070">MNTFQMRDKLKERLSHLDVDFKFNREEETLRIYRTDNNKGITIKLNAIVAKYEDKKEKIVDEIVYYVDEAIAQMADKTLESISSSQIMPVIRATSFDKKTKQGVPFIYDEHTAETAVYYAVDLGKSYRLIDESMLEDLKLTEQQIREMSLFNVRKLSNSYTTDEVKGNIFYFINSNDGYDASRILNTAFLNEIEAQCQGEMLVAVPHQDVLIIADIRNKTGYDVMAHLTMEFFTKGLVPITSLSFGYKQGHLEPIFILGKNNKQKRDPNVIQRLEANRRKFNKDK</sequence>
<protein>
    <recommendedName>
        <fullName evidence="1">UPF0354 protein SaurJH1_1833</fullName>
    </recommendedName>
</protein>
<organism>
    <name type="scientific">Staphylococcus aureus (strain JH1)</name>
    <dbReference type="NCBI Taxonomy" id="359787"/>
    <lineage>
        <taxon>Bacteria</taxon>
        <taxon>Bacillati</taxon>
        <taxon>Bacillota</taxon>
        <taxon>Bacilli</taxon>
        <taxon>Bacillales</taxon>
        <taxon>Staphylococcaceae</taxon>
        <taxon>Staphylococcus</taxon>
    </lineage>
</organism>
<gene>
    <name type="ordered locus">SaurJH1_1833</name>
</gene>
<proteinExistence type="inferred from homology"/>